<evidence type="ECO:0000255" key="1">
    <source>
        <dbReference type="HAMAP-Rule" id="MF_01371"/>
    </source>
</evidence>
<evidence type="ECO:0000305" key="2"/>
<gene>
    <name evidence="1" type="primary">rpmD</name>
    <name type="ordered locus">Shal_4116</name>
</gene>
<organism>
    <name type="scientific">Shewanella halifaxensis (strain HAW-EB4)</name>
    <dbReference type="NCBI Taxonomy" id="458817"/>
    <lineage>
        <taxon>Bacteria</taxon>
        <taxon>Pseudomonadati</taxon>
        <taxon>Pseudomonadota</taxon>
        <taxon>Gammaproteobacteria</taxon>
        <taxon>Alteromonadales</taxon>
        <taxon>Shewanellaceae</taxon>
        <taxon>Shewanella</taxon>
    </lineage>
</organism>
<comment type="subunit">
    <text evidence="1">Part of the 50S ribosomal subunit.</text>
</comment>
<comment type="similarity">
    <text evidence="1">Belongs to the universal ribosomal protein uL30 family.</text>
</comment>
<dbReference type="EMBL" id="CP000931">
    <property type="protein sequence ID" value="ABZ78656.1"/>
    <property type="molecule type" value="Genomic_DNA"/>
</dbReference>
<dbReference type="RefSeq" id="WP_012279169.1">
    <property type="nucleotide sequence ID" value="NC_010334.1"/>
</dbReference>
<dbReference type="SMR" id="B0TLZ4"/>
<dbReference type="STRING" id="458817.Shal_4116"/>
<dbReference type="KEGG" id="shl:Shal_4116"/>
<dbReference type="eggNOG" id="COG1841">
    <property type="taxonomic scope" value="Bacteria"/>
</dbReference>
<dbReference type="HOGENOM" id="CLU_131047_1_4_6"/>
<dbReference type="OrthoDB" id="9812790at2"/>
<dbReference type="Proteomes" id="UP000001317">
    <property type="component" value="Chromosome"/>
</dbReference>
<dbReference type="GO" id="GO:0022625">
    <property type="term" value="C:cytosolic large ribosomal subunit"/>
    <property type="evidence" value="ECO:0007669"/>
    <property type="project" value="TreeGrafter"/>
</dbReference>
<dbReference type="GO" id="GO:0003735">
    <property type="term" value="F:structural constituent of ribosome"/>
    <property type="evidence" value="ECO:0007669"/>
    <property type="project" value="InterPro"/>
</dbReference>
<dbReference type="GO" id="GO:0006412">
    <property type="term" value="P:translation"/>
    <property type="evidence" value="ECO:0007669"/>
    <property type="project" value="UniProtKB-UniRule"/>
</dbReference>
<dbReference type="CDD" id="cd01658">
    <property type="entry name" value="Ribosomal_L30"/>
    <property type="match status" value="1"/>
</dbReference>
<dbReference type="FunFam" id="3.30.1390.20:FF:000001">
    <property type="entry name" value="50S ribosomal protein L30"/>
    <property type="match status" value="1"/>
</dbReference>
<dbReference type="Gene3D" id="3.30.1390.20">
    <property type="entry name" value="Ribosomal protein L30, ferredoxin-like fold domain"/>
    <property type="match status" value="1"/>
</dbReference>
<dbReference type="HAMAP" id="MF_01371_B">
    <property type="entry name" value="Ribosomal_uL30_B"/>
    <property type="match status" value="1"/>
</dbReference>
<dbReference type="InterPro" id="IPR036919">
    <property type="entry name" value="Ribo_uL30_ferredoxin-like_sf"/>
</dbReference>
<dbReference type="InterPro" id="IPR005996">
    <property type="entry name" value="Ribosomal_uL30_bac-type"/>
</dbReference>
<dbReference type="InterPro" id="IPR018038">
    <property type="entry name" value="Ribosomal_uL30_CS"/>
</dbReference>
<dbReference type="InterPro" id="IPR016082">
    <property type="entry name" value="Ribosomal_uL30_ferredoxin-like"/>
</dbReference>
<dbReference type="NCBIfam" id="TIGR01308">
    <property type="entry name" value="rpmD_bact"/>
    <property type="match status" value="1"/>
</dbReference>
<dbReference type="PANTHER" id="PTHR15892:SF2">
    <property type="entry name" value="LARGE RIBOSOMAL SUBUNIT PROTEIN UL30M"/>
    <property type="match status" value="1"/>
</dbReference>
<dbReference type="PANTHER" id="PTHR15892">
    <property type="entry name" value="MITOCHONDRIAL RIBOSOMAL PROTEIN L30"/>
    <property type="match status" value="1"/>
</dbReference>
<dbReference type="Pfam" id="PF00327">
    <property type="entry name" value="Ribosomal_L30"/>
    <property type="match status" value="1"/>
</dbReference>
<dbReference type="PIRSF" id="PIRSF002211">
    <property type="entry name" value="Ribosomal_L30_bac-type"/>
    <property type="match status" value="1"/>
</dbReference>
<dbReference type="SUPFAM" id="SSF55129">
    <property type="entry name" value="Ribosomal protein L30p/L7e"/>
    <property type="match status" value="1"/>
</dbReference>
<dbReference type="PROSITE" id="PS00634">
    <property type="entry name" value="RIBOSOMAL_L30"/>
    <property type="match status" value="1"/>
</dbReference>
<keyword id="KW-0687">Ribonucleoprotein</keyword>
<keyword id="KW-0689">Ribosomal protein</keyword>
<protein>
    <recommendedName>
        <fullName evidence="1">Large ribosomal subunit protein uL30</fullName>
    </recommendedName>
    <alternativeName>
        <fullName evidence="2">50S ribosomal protein L30</fullName>
    </alternativeName>
</protein>
<accession>B0TLZ4</accession>
<reference key="1">
    <citation type="submission" date="2008-01" db="EMBL/GenBank/DDBJ databases">
        <title>Complete sequence of Shewanella halifaxensis HAW-EB4.</title>
        <authorList>
            <consortium name="US DOE Joint Genome Institute"/>
            <person name="Copeland A."/>
            <person name="Lucas S."/>
            <person name="Lapidus A."/>
            <person name="Glavina del Rio T."/>
            <person name="Dalin E."/>
            <person name="Tice H."/>
            <person name="Bruce D."/>
            <person name="Goodwin L."/>
            <person name="Pitluck S."/>
            <person name="Sims D."/>
            <person name="Brettin T."/>
            <person name="Detter J.C."/>
            <person name="Han C."/>
            <person name="Kuske C.R."/>
            <person name="Schmutz J."/>
            <person name="Larimer F."/>
            <person name="Land M."/>
            <person name="Hauser L."/>
            <person name="Kyrpides N."/>
            <person name="Kim E."/>
            <person name="Zhao J.-S."/>
            <person name="Richardson P."/>
        </authorList>
    </citation>
    <scope>NUCLEOTIDE SEQUENCE [LARGE SCALE GENOMIC DNA]</scope>
    <source>
        <strain>HAW-EB4</strain>
    </source>
</reference>
<feature type="chain" id="PRO_1000087266" description="Large ribosomal subunit protein uL30">
    <location>
        <begin position="1"/>
        <end position="61"/>
    </location>
</feature>
<name>RL30_SHEHH</name>
<sequence>MATKTLKVTQTKSSIGRLPKHRASLLGLGLRRINHTVEVEDTPSVRGMINKVYYMVSVEEV</sequence>
<proteinExistence type="inferred from homology"/>